<protein>
    <recommendedName>
        <fullName evidence="1">Glycine dehydrogenase (decarboxylating)</fullName>
        <ecNumber evidence="1">1.4.4.2</ecNumber>
    </recommendedName>
    <alternativeName>
        <fullName evidence="1">Glycine cleavage system P-protein</fullName>
    </alternativeName>
    <alternativeName>
        <fullName evidence="1">Glycine decarboxylase</fullName>
    </alternativeName>
    <alternativeName>
        <fullName evidence="1">Glycine dehydrogenase (aminomethyl-transferring)</fullName>
    </alternativeName>
</protein>
<proteinExistence type="inferred from homology"/>
<reference key="1">
    <citation type="journal article" date="2007" name="PLoS Genet.">
        <title>Patterns and implications of gene gain and loss in the evolution of Prochlorococcus.</title>
        <authorList>
            <person name="Kettler G.C."/>
            <person name="Martiny A.C."/>
            <person name="Huang K."/>
            <person name="Zucker J."/>
            <person name="Coleman M.L."/>
            <person name="Rodrigue S."/>
            <person name="Chen F."/>
            <person name="Lapidus A."/>
            <person name="Ferriera S."/>
            <person name="Johnson J."/>
            <person name="Steglich C."/>
            <person name="Church G.M."/>
            <person name="Richardson P."/>
            <person name="Chisholm S.W."/>
        </authorList>
    </citation>
    <scope>NUCLEOTIDE SEQUENCE [LARGE SCALE GENOMIC DNA]</scope>
    <source>
        <strain>NATL1A</strain>
    </source>
</reference>
<keyword id="KW-0560">Oxidoreductase</keyword>
<keyword id="KW-0663">Pyridoxal phosphate</keyword>
<gene>
    <name evidence="1" type="primary">gcvP</name>
    <name type="ordered locus">NATL1_21381</name>
</gene>
<feature type="chain" id="PRO_1000045594" description="Glycine dehydrogenase (decarboxylating)">
    <location>
        <begin position="1"/>
        <end position="968"/>
    </location>
</feature>
<feature type="modified residue" description="N6-(pyridoxal phosphate)lysine" evidence="1">
    <location>
        <position position="712"/>
    </location>
</feature>
<sequence>MSKAELKDFTFKSRHIGPTNEDEALMLQHLGYENSEEFISSVIPNEIFDSENNVVSIPDGCDQNKALKEINIISKKNVEHRSLIGLGYHSTVIPPVIQRNVLENPNWYTAYTPYQAEISQGRLEALFNFQTLISELTGLPISNASLLDEATAAAEAISLSLAVRKNKNANKFLVDQEILPQTFDVLKTRCEPLGISLEMFENNNFEIDKNIFGILIQLPGKNGRIWDPTKIINDAHKCNAIVTIAIDPLAQVLIKPMGEFGADIVVGSAQRFGVPIACGGPHAAFFATKEIYKRQIPGRIVGQSVDVEGNQALRLALQTREQHIRRDKATSNICTAQVLLAVLSSFYAVHHGPKGLKQIAENVVKYRSNFESILMNLEYPIEKYSAFDSVDVYCSEASEVIQLASEEGYNFRVLPIGSDFENAKGFGVTFDELTCDEEIYTLHQILAQVKGKKAHDLSNFLNENASLVDIPLREKSWLEQSVFNQYQSETDLMRYIHSLVSKDFSLVQGMIPLGSCTMKLNSAAELLPIEWREFSSIHPFAPHAQLAGFHEIINDLENWLSALTGFQGVSLQPNAGSQGEFAGLLVIRSWHQSLGEGHRNICLIPTSAHGTNPASAVMSGFKVVSVKCDEYGNVDLEDLKNKSKIHSKNLAALMVTYPSTHGVFEPNIREMCQVIHQEGGQVYLDGANLNAQVGICRPGSYGIDVCHLNLHKTFSIPHGGGGPGVGPIAVADHLVPYLPGHSIIKCGGEKAISAVSAAPFGSAGILPISWMYIRMMGSDGLRKASSIAILSANYLAKRLDPYYPVLFKDPNGLVAHECILDLRPLKSQLGIEVEDVAKRLMDYGFHAPTISWPVAGTLMVEPTESESLPELDRFCDAMIGIREEIEQIKLGKIDPINNPLKQSPHTLKRVTSDDWDRPYSRKEAAYPLPDQEKYKFWPSVSRINNAYGDRNLICSCPSVQDLEDINSV</sequence>
<dbReference type="EC" id="1.4.4.2" evidence="1"/>
<dbReference type="EMBL" id="CP000553">
    <property type="protein sequence ID" value="ABM76694.1"/>
    <property type="molecule type" value="Genomic_DNA"/>
</dbReference>
<dbReference type="RefSeq" id="WP_011824632.1">
    <property type="nucleotide sequence ID" value="NC_008819.1"/>
</dbReference>
<dbReference type="SMR" id="A2C5D4"/>
<dbReference type="KEGG" id="pme:NATL1_21381"/>
<dbReference type="eggNOG" id="COG0403">
    <property type="taxonomic scope" value="Bacteria"/>
</dbReference>
<dbReference type="eggNOG" id="COG1003">
    <property type="taxonomic scope" value="Bacteria"/>
</dbReference>
<dbReference type="HOGENOM" id="CLU_004620_2_1_3"/>
<dbReference type="Proteomes" id="UP000002592">
    <property type="component" value="Chromosome"/>
</dbReference>
<dbReference type="GO" id="GO:0005829">
    <property type="term" value="C:cytosol"/>
    <property type="evidence" value="ECO:0007669"/>
    <property type="project" value="TreeGrafter"/>
</dbReference>
<dbReference type="GO" id="GO:0005960">
    <property type="term" value="C:glycine cleavage complex"/>
    <property type="evidence" value="ECO:0007669"/>
    <property type="project" value="TreeGrafter"/>
</dbReference>
<dbReference type="GO" id="GO:0016594">
    <property type="term" value="F:glycine binding"/>
    <property type="evidence" value="ECO:0007669"/>
    <property type="project" value="TreeGrafter"/>
</dbReference>
<dbReference type="GO" id="GO:0004375">
    <property type="term" value="F:glycine dehydrogenase (decarboxylating) activity"/>
    <property type="evidence" value="ECO:0007669"/>
    <property type="project" value="UniProtKB-EC"/>
</dbReference>
<dbReference type="GO" id="GO:0030170">
    <property type="term" value="F:pyridoxal phosphate binding"/>
    <property type="evidence" value="ECO:0007669"/>
    <property type="project" value="TreeGrafter"/>
</dbReference>
<dbReference type="GO" id="GO:0019464">
    <property type="term" value="P:glycine decarboxylation via glycine cleavage system"/>
    <property type="evidence" value="ECO:0007669"/>
    <property type="project" value="UniProtKB-UniRule"/>
</dbReference>
<dbReference type="CDD" id="cd00613">
    <property type="entry name" value="GDC-P"/>
    <property type="match status" value="1"/>
</dbReference>
<dbReference type="FunFam" id="3.40.640.10:FF:000005">
    <property type="entry name" value="Glycine dehydrogenase (decarboxylating), mitochondrial"/>
    <property type="match status" value="1"/>
</dbReference>
<dbReference type="FunFam" id="3.90.1150.10:FF:000007">
    <property type="entry name" value="Glycine dehydrogenase (decarboxylating), mitochondrial"/>
    <property type="match status" value="1"/>
</dbReference>
<dbReference type="FunFam" id="3.40.640.10:FF:000007">
    <property type="entry name" value="glycine dehydrogenase (Decarboxylating), mitochondrial"/>
    <property type="match status" value="1"/>
</dbReference>
<dbReference type="Gene3D" id="3.90.1150.10">
    <property type="entry name" value="Aspartate Aminotransferase, domain 1"/>
    <property type="match status" value="2"/>
</dbReference>
<dbReference type="Gene3D" id="3.40.640.10">
    <property type="entry name" value="Type I PLP-dependent aspartate aminotransferase-like (Major domain)"/>
    <property type="match status" value="2"/>
</dbReference>
<dbReference type="HAMAP" id="MF_00711">
    <property type="entry name" value="GcvP"/>
    <property type="match status" value="1"/>
</dbReference>
<dbReference type="InterPro" id="IPR003437">
    <property type="entry name" value="GcvP"/>
</dbReference>
<dbReference type="InterPro" id="IPR049316">
    <property type="entry name" value="GDC-P_C"/>
</dbReference>
<dbReference type="InterPro" id="IPR049315">
    <property type="entry name" value="GDC-P_N"/>
</dbReference>
<dbReference type="InterPro" id="IPR020581">
    <property type="entry name" value="GDC_P"/>
</dbReference>
<dbReference type="InterPro" id="IPR015424">
    <property type="entry name" value="PyrdxlP-dep_Trfase"/>
</dbReference>
<dbReference type="InterPro" id="IPR015421">
    <property type="entry name" value="PyrdxlP-dep_Trfase_major"/>
</dbReference>
<dbReference type="InterPro" id="IPR015422">
    <property type="entry name" value="PyrdxlP-dep_Trfase_small"/>
</dbReference>
<dbReference type="NCBIfam" id="TIGR00461">
    <property type="entry name" value="gcvP"/>
    <property type="match status" value="1"/>
</dbReference>
<dbReference type="NCBIfam" id="NF003346">
    <property type="entry name" value="PRK04366.1"/>
    <property type="match status" value="1"/>
</dbReference>
<dbReference type="PANTHER" id="PTHR11773:SF1">
    <property type="entry name" value="GLYCINE DEHYDROGENASE (DECARBOXYLATING), MITOCHONDRIAL"/>
    <property type="match status" value="1"/>
</dbReference>
<dbReference type="PANTHER" id="PTHR11773">
    <property type="entry name" value="GLYCINE DEHYDROGENASE, DECARBOXYLATING"/>
    <property type="match status" value="1"/>
</dbReference>
<dbReference type="Pfam" id="PF21478">
    <property type="entry name" value="GcvP2_C"/>
    <property type="match status" value="1"/>
</dbReference>
<dbReference type="Pfam" id="PF02347">
    <property type="entry name" value="GDC-P"/>
    <property type="match status" value="2"/>
</dbReference>
<dbReference type="SUPFAM" id="SSF53383">
    <property type="entry name" value="PLP-dependent transferases"/>
    <property type="match status" value="2"/>
</dbReference>
<accession>A2C5D4</accession>
<evidence type="ECO:0000255" key="1">
    <source>
        <dbReference type="HAMAP-Rule" id="MF_00711"/>
    </source>
</evidence>
<organism>
    <name type="scientific">Prochlorococcus marinus (strain NATL1A)</name>
    <dbReference type="NCBI Taxonomy" id="167555"/>
    <lineage>
        <taxon>Bacteria</taxon>
        <taxon>Bacillati</taxon>
        <taxon>Cyanobacteriota</taxon>
        <taxon>Cyanophyceae</taxon>
        <taxon>Synechococcales</taxon>
        <taxon>Prochlorococcaceae</taxon>
        <taxon>Prochlorococcus</taxon>
    </lineage>
</organism>
<name>GCSP_PROM1</name>
<comment type="function">
    <text evidence="1">The glycine cleavage system catalyzes the degradation of glycine. The P protein binds the alpha-amino group of glycine through its pyridoxal phosphate cofactor; CO(2) is released and the remaining methylamine moiety is then transferred to the lipoamide cofactor of the H protein.</text>
</comment>
<comment type="catalytic activity">
    <reaction evidence="1">
        <text>N(6)-[(R)-lipoyl]-L-lysyl-[glycine-cleavage complex H protein] + glycine + H(+) = N(6)-[(R)-S(8)-aminomethyldihydrolipoyl]-L-lysyl-[glycine-cleavage complex H protein] + CO2</text>
        <dbReference type="Rhea" id="RHEA:24304"/>
        <dbReference type="Rhea" id="RHEA-COMP:10494"/>
        <dbReference type="Rhea" id="RHEA-COMP:10495"/>
        <dbReference type="ChEBI" id="CHEBI:15378"/>
        <dbReference type="ChEBI" id="CHEBI:16526"/>
        <dbReference type="ChEBI" id="CHEBI:57305"/>
        <dbReference type="ChEBI" id="CHEBI:83099"/>
        <dbReference type="ChEBI" id="CHEBI:83143"/>
        <dbReference type="EC" id="1.4.4.2"/>
    </reaction>
</comment>
<comment type="cofactor">
    <cofactor evidence="1">
        <name>pyridoxal 5'-phosphate</name>
        <dbReference type="ChEBI" id="CHEBI:597326"/>
    </cofactor>
</comment>
<comment type="subunit">
    <text evidence="1">The glycine cleavage system is composed of four proteins: P, T, L and H.</text>
</comment>
<comment type="similarity">
    <text evidence="1">Belongs to the GcvP family.</text>
</comment>